<proteinExistence type="inferred from homology"/>
<comment type="similarity">
    <text evidence="1">Belongs to the PPR family. PCMP-E subfamily.</text>
</comment>
<comment type="online information" name="Pentatricopeptide repeat proteins">
    <link uri="https://ppr.plantenergy.uwa.edu.au"/>
</comment>
<gene>
    <name type="primary">PCMP-E103</name>
    <name type="ordered locus">At5g47460</name>
    <name type="ORF">MNJ7.5</name>
</gene>
<organism>
    <name type="scientific">Arabidopsis thaliana</name>
    <name type="common">Mouse-ear cress</name>
    <dbReference type="NCBI Taxonomy" id="3702"/>
    <lineage>
        <taxon>Eukaryota</taxon>
        <taxon>Viridiplantae</taxon>
        <taxon>Streptophyta</taxon>
        <taxon>Embryophyta</taxon>
        <taxon>Tracheophyta</taxon>
        <taxon>Spermatophyta</taxon>
        <taxon>Magnoliopsida</taxon>
        <taxon>eudicotyledons</taxon>
        <taxon>Gunneridae</taxon>
        <taxon>Pentapetalae</taxon>
        <taxon>rosids</taxon>
        <taxon>malvids</taxon>
        <taxon>Brassicales</taxon>
        <taxon>Brassicaceae</taxon>
        <taxon>Camelineae</taxon>
        <taxon>Arabidopsis</taxon>
    </lineage>
</organism>
<feature type="chain" id="PRO_0000363560" description="Putative pentatricopeptide repeat-containing protein At5g47460">
    <location>
        <begin position="1"/>
        <end position="576"/>
    </location>
</feature>
<feature type="repeat" description="PPR 1">
    <location>
        <begin position="20"/>
        <end position="53"/>
    </location>
</feature>
<feature type="repeat" description="PPR 2">
    <location>
        <begin position="54"/>
        <end position="88"/>
    </location>
</feature>
<feature type="repeat" description="PPR 3">
    <location>
        <begin position="89"/>
        <end position="119"/>
    </location>
</feature>
<feature type="repeat" description="PPR 4">
    <location>
        <begin position="120"/>
        <end position="154"/>
    </location>
</feature>
<feature type="repeat" description="PPR 5">
    <location>
        <begin position="155"/>
        <end position="189"/>
    </location>
</feature>
<feature type="repeat" description="PPR 6">
    <location>
        <begin position="191"/>
        <end position="225"/>
    </location>
</feature>
<feature type="repeat" description="PPR 7">
    <location>
        <begin position="226"/>
        <end position="252"/>
    </location>
</feature>
<feature type="repeat" description="PPR 8">
    <location>
        <begin position="253"/>
        <end position="287"/>
    </location>
</feature>
<feature type="repeat" description="PPR 9">
    <location>
        <begin position="288"/>
        <end position="318"/>
    </location>
</feature>
<feature type="repeat" description="PPR 10">
    <location>
        <begin position="319"/>
        <end position="353"/>
    </location>
</feature>
<feature type="repeat" description="PPR 11">
    <location>
        <begin position="354"/>
        <end position="384"/>
    </location>
</feature>
<feature type="repeat" description="PPR 12">
    <location>
        <begin position="385"/>
        <end position="419"/>
    </location>
</feature>
<feature type="repeat" description="PPR 13">
    <location>
        <begin position="421"/>
        <end position="452"/>
    </location>
</feature>
<feature type="repeat" description="PPR 14">
    <location>
        <begin position="458"/>
        <end position="488"/>
    </location>
</feature>
<feature type="region of interest" description="Type E motif">
    <location>
        <begin position="493"/>
        <end position="570"/>
    </location>
</feature>
<evidence type="ECO:0000305" key="1"/>
<keyword id="KW-1185">Reference proteome</keyword>
<keyword id="KW-0677">Repeat</keyword>
<reference key="1">
    <citation type="submission" date="1999-04" db="EMBL/GenBank/DDBJ databases">
        <title>Structural analysis of Arabidopsis thaliana chromosome 5. XI.</title>
        <authorList>
            <person name="Kaneko T."/>
            <person name="Katoh T."/>
            <person name="Asamizu E."/>
            <person name="Sato S."/>
            <person name="Nakamura Y."/>
            <person name="Kotani H."/>
            <person name="Tabata S."/>
        </authorList>
    </citation>
    <scope>NUCLEOTIDE SEQUENCE [LARGE SCALE GENOMIC DNA]</scope>
    <source>
        <strain>cv. Columbia</strain>
    </source>
</reference>
<reference key="2">
    <citation type="journal article" date="2017" name="Plant J.">
        <title>Araport11: a complete reannotation of the Arabidopsis thaliana reference genome.</title>
        <authorList>
            <person name="Cheng C.Y."/>
            <person name="Krishnakumar V."/>
            <person name="Chan A.P."/>
            <person name="Thibaud-Nissen F."/>
            <person name="Schobel S."/>
            <person name="Town C.D."/>
        </authorList>
    </citation>
    <scope>GENOME REANNOTATION</scope>
    <source>
        <strain>cv. Columbia</strain>
    </source>
</reference>
<reference key="3">
    <citation type="journal article" date="2004" name="Plant Cell">
        <title>Genome-wide analysis of Arabidopsis pentatricopeptide repeat proteins reveals their essential role in organelle biogenesis.</title>
        <authorList>
            <person name="Lurin C."/>
            <person name="Andres C."/>
            <person name="Aubourg S."/>
            <person name="Bellaoui M."/>
            <person name="Bitton F."/>
            <person name="Bruyere C."/>
            <person name="Caboche M."/>
            <person name="Debast C."/>
            <person name="Gualberto J."/>
            <person name="Hoffmann B."/>
            <person name="Lecharny A."/>
            <person name="Le Ret M."/>
            <person name="Martin-Magniette M.-L."/>
            <person name="Mireau H."/>
            <person name="Peeters N."/>
            <person name="Renou J.-P."/>
            <person name="Szurek B."/>
            <person name="Taconnat L."/>
            <person name="Small I."/>
        </authorList>
    </citation>
    <scope>GENE FAMILY</scope>
</reference>
<protein>
    <recommendedName>
        <fullName>Putative pentatricopeptide repeat-containing protein At5g47460</fullName>
    </recommendedName>
</protein>
<accession>Q9FGL1</accession>
<name>PP423_ARATH</name>
<sequence length="576" mass="64398">MLRTVSNAFTTRSHVGSTASSNSWSTIVPALARFGSIGVLRAAVELINDGEKPDASPLVHLLRVSGNYGYVSLCRQLHGYVTKHGFVSNTRLSNSLMRFYKTSDSLEDAHKVFDEMPDPDVISWNSLVSGYVQSGRFQEGICLFLELHRSDVFPNEFSFTAALAACARLHLSPLGACIHSKLVKLGLEKGNVVVGNCLIDMYGKCGFMDDAVLVFQHMEEKDTVSWNAIVASCSRNGKLELGLWFFHQMPNPDTVTYNELIDAFVKSGDFNNAFQVLSDMPNPNSSSWNTILTGYVNSEKSGEATEFFTKMHSSGVRFDEYSLSIVLAAVAALAVVPWGSLIHACAHKLGLDSRVVVASALIDMYSKCGMLKHAELMFWTMPRKNLIVWNEMISGYARNGDSIEAIKLFNQLKQERFLKPDRFTFLNLLAVCSHCEVPMEVMLGYFEMMINEYRIKPSVEHCCSLIRAMGQRGEVWQAKQVIQEFGFGYDGVAWRALLGACSARKDLKAAKTVAAKMIELGDADKDEYLYIVMSNLYAYHERWREVGQIRKIMRESGVLKEVGSSWIDSRTKCSSY</sequence>
<dbReference type="EMBL" id="AB025628">
    <property type="protein sequence ID" value="BAB09072.1"/>
    <property type="molecule type" value="Genomic_DNA"/>
</dbReference>
<dbReference type="EMBL" id="CP002688">
    <property type="protein sequence ID" value="AED95522.1"/>
    <property type="molecule type" value="Genomic_DNA"/>
</dbReference>
<dbReference type="RefSeq" id="NP_199557.1">
    <property type="nucleotide sequence ID" value="NM_124119.2"/>
</dbReference>
<dbReference type="SMR" id="Q9FGL1"/>
<dbReference type="FunCoup" id="Q9FGL1">
    <property type="interactions" value="106"/>
</dbReference>
<dbReference type="STRING" id="3702.Q9FGL1"/>
<dbReference type="PaxDb" id="3702-AT5G47460.1"/>
<dbReference type="ProteomicsDB" id="249304"/>
<dbReference type="EnsemblPlants" id="AT5G47460.1">
    <property type="protein sequence ID" value="AT5G47460.1"/>
    <property type="gene ID" value="AT5G47460"/>
</dbReference>
<dbReference type="GeneID" id="834796"/>
<dbReference type="Gramene" id="AT5G47460.1">
    <property type="protein sequence ID" value="AT5G47460.1"/>
    <property type="gene ID" value="AT5G47460"/>
</dbReference>
<dbReference type="KEGG" id="ath:AT5G47460"/>
<dbReference type="Araport" id="AT5G47460"/>
<dbReference type="TAIR" id="AT5G47460"/>
<dbReference type="eggNOG" id="KOG4197">
    <property type="taxonomic scope" value="Eukaryota"/>
</dbReference>
<dbReference type="HOGENOM" id="CLU_002706_0_1_1"/>
<dbReference type="InParanoid" id="Q9FGL1"/>
<dbReference type="OMA" id="PSVEHCC"/>
<dbReference type="PhylomeDB" id="Q9FGL1"/>
<dbReference type="PRO" id="PR:Q9FGL1"/>
<dbReference type="Proteomes" id="UP000006548">
    <property type="component" value="Chromosome 5"/>
</dbReference>
<dbReference type="ExpressionAtlas" id="Q9FGL1">
    <property type="expression patterns" value="baseline and differential"/>
</dbReference>
<dbReference type="GO" id="GO:0003723">
    <property type="term" value="F:RNA binding"/>
    <property type="evidence" value="ECO:0007669"/>
    <property type="project" value="InterPro"/>
</dbReference>
<dbReference type="GO" id="GO:0009451">
    <property type="term" value="P:RNA modification"/>
    <property type="evidence" value="ECO:0007669"/>
    <property type="project" value="InterPro"/>
</dbReference>
<dbReference type="FunFam" id="1.25.40.10:FF:000453">
    <property type="entry name" value="Pentatricopeptide repeat-containing protein mitochondrial"/>
    <property type="match status" value="1"/>
</dbReference>
<dbReference type="FunFam" id="1.25.40.10:FF:001486">
    <property type="entry name" value="Pentatricopeptide repeat-containing protein mitochondrial"/>
    <property type="match status" value="1"/>
</dbReference>
<dbReference type="FunFam" id="1.25.40.10:FF:000205">
    <property type="entry name" value="Pentatricopeptide repeat-containing protein, mitochondrial"/>
    <property type="match status" value="1"/>
</dbReference>
<dbReference type="FunFam" id="1.25.40.10:FF:000606">
    <property type="entry name" value="Putative pentatricopeptide repeat-containing protein"/>
    <property type="match status" value="1"/>
</dbReference>
<dbReference type="FunFam" id="1.25.40.10:FF:002123">
    <property type="entry name" value="Tetratricopeptide repeat (TPR)-like superfamily protein"/>
    <property type="match status" value="1"/>
</dbReference>
<dbReference type="Gene3D" id="1.25.40.10">
    <property type="entry name" value="Tetratricopeptide repeat domain"/>
    <property type="match status" value="5"/>
</dbReference>
<dbReference type="InterPro" id="IPR046848">
    <property type="entry name" value="E_motif"/>
</dbReference>
<dbReference type="InterPro" id="IPR002885">
    <property type="entry name" value="Pentatricopeptide_rpt"/>
</dbReference>
<dbReference type="InterPro" id="IPR046960">
    <property type="entry name" value="PPR_At4g14850-like_plant"/>
</dbReference>
<dbReference type="InterPro" id="IPR011990">
    <property type="entry name" value="TPR-like_helical_dom_sf"/>
</dbReference>
<dbReference type="NCBIfam" id="TIGR00756">
    <property type="entry name" value="PPR"/>
    <property type="match status" value="5"/>
</dbReference>
<dbReference type="PANTHER" id="PTHR47926">
    <property type="entry name" value="PENTATRICOPEPTIDE REPEAT-CONTAINING PROTEIN"/>
    <property type="match status" value="1"/>
</dbReference>
<dbReference type="Pfam" id="PF20431">
    <property type="entry name" value="E_motif"/>
    <property type="match status" value="1"/>
</dbReference>
<dbReference type="Pfam" id="PF01535">
    <property type="entry name" value="PPR"/>
    <property type="match status" value="3"/>
</dbReference>
<dbReference type="Pfam" id="PF13041">
    <property type="entry name" value="PPR_2"/>
    <property type="match status" value="4"/>
</dbReference>
<dbReference type="PROSITE" id="PS51375">
    <property type="entry name" value="PPR"/>
    <property type="match status" value="12"/>
</dbReference>